<comment type="function">
    <text evidence="2">Displays beta-galactosidase activity with the artificial chromogenic substrate o-nitrophenyl-beta-D-galactopyranoside (ONPG).</text>
</comment>
<comment type="catalytic activity">
    <reaction evidence="2">
        <text>Hydrolysis of terminal non-reducing beta-D-galactose residues in beta-D-galactosides.</text>
        <dbReference type="EC" id="3.2.1.23"/>
    </reaction>
</comment>
<comment type="biophysicochemical properties">
    <phDependence>
        <text evidence="2">Optimum pH is 7.</text>
    </phDependence>
    <temperatureDependence>
        <text evidence="2">Thermostable up to 70 degrees Celsius.</text>
    </temperatureDependence>
</comment>
<comment type="subunit">
    <text evidence="2">Homodimer.</text>
</comment>
<comment type="induction">
    <text evidence="2">Induced during growth on lactose. Repressed by glucose.</text>
</comment>
<comment type="similarity">
    <text evidence="4">Belongs to the glycosyl hydrolase 2 family.</text>
</comment>
<protein>
    <recommendedName>
        <fullName evidence="3">Beta-galactosidase</fullName>
        <shortName evidence="3">Beta-gal</shortName>
        <ecNumber evidence="2">3.2.1.23</ecNumber>
    </recommendedName>
</protein>
<sequence length="716" mass="83781">MRKIIPINNNWYFKADYEEGYEKVDDLRSFENVNLPHTNIELPYNYFDEKMYQIKSCYKYPLHISEKYRDKVIYIHFEGVMAYAQVYLNGLYIGEHKGGYTPFDIRIDEVYDWKKELNMLTVVVDSTERSDIPPKGGQIDYLTYGGIYREVSLGIYDDVFIKNIKVETHGIYDNEKSLNLIVHLENLNHQSGNVKFKVKINDKNGKEVFYKEFNTYLDAVKDVYSFNIENLKDIKLWDVDNPNLYEIKVGMKINNFSDEYDNKFGFREAVFKPDGFYLNGRKLKLRGLNRHQSYPYVGYAMPRRVQEKDAEILKNELHLNIVRTSHYPQSKHFLNKCDELGLLVFEEIPGWQYIGNSEWKKVAEQNLREMITRDWNHPSIILWGVRINESQDDDAFYKNMNKIAHEIDPTRQTGGVRYITNSSFLEDVYTFNDFIHDGINKPLRKQQEVTGLEHNVPYLVTEYNGHMYPTKRFDNEERQMEHCLRHLRIQNASYLDDSISGAIGWCAFDYNTHKDFGSGDRICYHGVMDMFRLPKFASYVYKSQVSPDIEPILEPVTFWARGERSIGGVIPLIIFTNCDYIELQYGNKTKIDNIYPNRDAYKGIPYPPIIIDYDIVKPEMIGAWGMVWEDLTLKGFYKGNKVIERKFSREPIPTYLYVVPDDTILSATQKDATRIVVKILDQYGNLLPFINEVIKIEIEGPAKLQGPNEVALIGGA</sequence>
<reference key="1">
    <citation type="journal article" date="1991" name="Gene">
        <title>Cloning and analysis of the beta-galactosidase-encoding gene from Clostridium thermosulfurogenes EM1.</title>
        <authorList>
            <person name="Burchhardt G."/>
            <person name="Bahl H."/>
        </authorList>
    </citation>
    <scope>NUCLEOTIDE SEQUENCE [GENOMIC DNA]</scope>
    <scope>PROTEIN SEQUENCE OF 1-27</scope>
    <scope>FUNCTION</scope>
    <scope>CATALYTIC ACTIVITY</scope>
    <scope>BIOPHYSICOCHEMICAL PROPERTIES</scope>
    <scope>SUBUNIT</scope>
    <scope>INDUCTION</scope>
    <source>
        <strain>DSM 3896 / EM1</strain>
    </source>
</reference>
<proteinExistence type="evidence at protein level"/>
<evidence type="ECO:0000250" key="1"/>
<evidence type="ECO:0000269" key="2">
    <source>
    </source>
</evidence>
<evidence type="ECO:0000303" key="3">
    <source>
    </source>
</evidence>
<evidence type="ECO:0000305" key="4"/>
<gene>
    <name evidence="3" type="primary">lacZ</name>
</gene>
<organism>
    <name type="scientific">Thermoanaerobacterium thermosulfurigenes</name>
    <name type="common">Clostridium thermosulfurogenes</name>
    <dbReference type="NCBI Taxonomy" id="33950"/>
    <lineage>
        <taxon>Bacteria</taxon>
        <taxon>Bacillati</taxon>
        <taxon>Bacillota</taxon>
        <taxon>Clostridia</taxon>
        <taxon>Thermoanaerobacterales</taxon>
        <taxon>Thermoanaerobacteraceae</taxon>
        <taxon>Thermoanaerobacterium</taxon>
    </lineage>
</organism>
<name>BGAL_THETU</name>
<accession>P26257</accession>
<dbReference type="EC" id="3.2.1.23" evidence="2"/>
<dbReference type="EMBL" id="M57579">
    <property type="protein sequence ID" value="AAA23249.1"/>
    <property type="molecule type" value="Genomic_DNA"/>
</dbReference>
<dbReference type="PIR" id="JU0275">
    <property type="entry name" value="JU0275"/>
</dbReference>
<dbReference type="SMR" id="P26257"/>
<dbReference type="CAZy" id="GH2">
    <property type="family name" value="Glycoside Hydrolase Family 2"/>
</dbReference>
<dbReference type="GO" id="GO:0004565">
    <property type="term" value="F:beta-galactosidase activity"/>
    <property type="evidence" value="ECO:0007669"/>
    <property type="project" value="UniProtKB-EC"/>
</dbReference>
<dbReference type="GO" id="GO:0005975">
    <property type="term" value="P:carbohydrate metabolic process"/>
    <property type="evidence" value="ECO:0007669"/>
    <property type="project" value="InterPro"/>
</dbReference>
<dbReference type="Gene3D" id="2.60.120.260">
    <property type="entry name" value="Galactose-binding domain-like"/>
    <property type="match status" value="1"/>
</dbReference>
<dbReference type="Gene3D" id="3.20.20.80">
    <property type="entry name" value="Glycosidases"/>
    <property type="match status" value="1"/>
</dbReference>
<dbReference type="Gene3D" id="2.60.40.10">
    <property type="entry name" value="Immunoglobulins"/>
    <property type="match status" value="2"/>
</dbReference>
<dbReference type="InterPro" id="IPR036156">
    <property type="entry name" value="Beta-gal/glucu_dom_sf"/>
</dbReference>
<dbReference type="InterPro" id="IPR008979">
    <property type="entry name" value="Galactose-bd-like_sf"/>
</dbReference>
<dbReference type="InterPro" id="IPR051913">
    <property type="entry name" value="GH2_Domain-Containing"/>
</dbReference>
<dbReference type="InterPro" id="IPR040605">
    <property type="entry name" value="Glyco_hydro2_dom5"/>
</dbReference>
<dbReference type="InterPro" id="IPR006101">
    <property type="entry name" value="Glyco_hydro_2"/>
</dbReference>
<dbReference type="InterPro" id="IPR023232">
    <property type="entry name" value="Glyco_hydro_2_AS"/>
</dbReference>
<dbReference type="InterPro" id="IPR006103">
    <property type="entry name" value="Glyco_hydro_2_cat"/>
</dbReference>
<dbReference type="InterPro" id="IPR023230">
    <property type="entry name" value="Glyco_hydro_2_CS"/>
</dbReference>
<dbReference type="InterPro" id="IPR006102">
    <property type="entry name" value="Glyco_hydro_2_Ig-like"/>
</dbReference>
<dbReference type="InterPro" id="IPR006104">
    <property type="entry name" value="Glyco_hydro_2_N"/>
</dbReference>
<dbReference type="InterPro" id="IPR017853">
    <property type="entry name" value="Glycoside_hydrolase_SF"/>
</dbReference>
<dbReference type="InterPro" id="IPR013783">
    <property type="entry name" value="Ig-like_fold"/>
</dbReference>
<dbReference type="PANTHER" id="PTHR42732">
    <property type="entry name" value="BETA-GALACTOSIDASE"/>
    <property type="match status" value="1"/>
</dbReference>
<dbReference type="PANTHER" id="PTHR42732:SF1">
    <property type="entry name" value="BETA-MANNOSIDASE"/>
    <property type="match status" value="1"/>
</dbReference>
<dbReference type="Pfam" id="PF18565">
    <property type="entry name" value="Glyco_hydro2_C5"/>
    <property type="match status" value="1"/>
</dbReference>
<dbReference type="Pfam" id="PF00703">
    <property type="entry name" value="Glyco_hydro_2"/>
    <property type="match status" value="1"/>
</dbReference>
<dbReference type="Pfam" id="PF02836">
    <property type="entry name" value="Glyco_hydro_2_C"/>
    <property type="match status" value="1"/>
</dbReference>
<dbReference type="Pfam" id="PF02837">
    <property type="entry name" value="Glyco_hydro_2_N"/>
    <property type="match status" value="1"/>
</dbReference>
<dbReference type="PRINTS" id="PR00132">
    <property type="entry name" value="GLHYDRLASE2"/>
</dbReference>
<dbReference type="SUPFAM" id="SSF51445">
    <property type="entry name" value="(Trans)glycosidases"/>
    <property type="match status" value="1"/>
</dbReference>
<dbReference type="SUPFAM" id="SSF49303">
    <property type="entry name" value="beta-Galactosidase/glucuronidase domain"/>
    <property type="match status" value="1"/>
</dbReference>
<dbReference type="SUPFAM" id="SSF49785">
    <property type="entry name" value="Galactose-binding domain-like"/>
    <property type="match status" value="1"/>
</dbReference>
<dbReference type="PROSITE" id="PS00719">
    <property type="entry name" value="GLYCOSYL_HYDROL_F2_1"/>
    <property type="match status" value="1"/>
</dbReference>
<dbReference type="PROSITE" id="PS00608">
    <property type="entry name" value="GLYCOSYL_HYDROL_F2_2"/>
    <property type="match status" value="1"/>
</dbReference>
<feature type="chain" id="PRO_0000057679" description="Beta-galactosidase">
    <location>
        <begin position="1"/>
        <end position="716"/>
    </location>
</feature>
<feature type="active site" description="Proton donor" evidence="1">
    <location>
        <position position="389"/>
    </location>
</feature>
<feature type="active site" description="Nucleophile" evidence="1">
    <location>
        <position position="462"/>
    </location>
</feature>
<keyword id="KW-0903">Direct protein sequencing</keyword>
<keyword id="KW-0326">Glycosidase</keyword>
<keyword id="KW-0378">Hydrolase</keyword>